<organism>
    <name type="scientific">Afipia carboxidovorans (strain ATCC 49405 / DSM 1227 / KCTC 32145 / OM5)</name>
    <name type="common">Oligotropha carboxidovorans</name>
    <dbReference type="NCBI Taxonomy" id="504832"/>
    <lineage>
        <taxon>Bacteria</taxon>
        <taxon>Pseudomonadati</taxon>
        <taxon>Pseudomonadota</taxon>
        <taxon>Alphaproteobacteria</taxon>
        <taxon>Hyphomicrobiales</taxon>
        <taxon>Nitrobacteraceae</taxon>
        <taxon>Afipia</taxon>
    </lineage>
</organism>
<reference key="1">
    <citation type="journal article" date="2008" name="J. Bacteriol.">
        <title>Genome sequence of the chemolithoautotrophic bacterium Oligotropha carboxidovorans OM5T.</title>
        <authorList>
            <person name="Paul D."/>
            <person name="Bridges S."/>
            <person name="Burgess S.C."/>
            <person name="Dandass Y."/>
            <person name="Lawrence M.L."/>
        </authorList>
    </citation>
    <scope>NUCLEOTIDE SEQUENCE [LARGE SCALE GENOMIC DNA]</scope>
    <source>
        <strain>ATCC 49405 / DSM 1227 / KCTC 32145 / OM5</strain>
    </source>
</reference>
<reference key="2">
    <citation type="journal article" date="2011" name="J. Bacteriol.">
        <title>Complete genome sequences of the chemolithoautotrophic Oligotropha carboxidovorans strains OM4 and OM5.</title>
        <authorList>
            <person name="Volland S."/>
            <person name="Rachinger M."/>
            <person name="Strittmatter A."/>
            <person name="Daniel R."/>
            <person name="Gottschalk G."/>
            <person name="Meyer O."/>
        </authorList>
    </citation>
    <scope>NUCLEOTIDE SEQUENCE [LARGE SCALE GENOMIC DNA]</scope>
    <source>
        <strain>ATCC 49405 / DSM 1227 / KCTC 32145 / OM5</strain>
    </source>
</reference>
<sequence>MEKFTVVNSVAAPLKIINVDTDMIIPKQYLKTIKRTGLGKGLFSEQRYKEDGSENPDFVLNKPAYRNAQILVAGDNFGCGSSREHAPWALADFGIRCVISTSFGDIFYNNSFKNGLLPIRVTHEQLDKLFEDAERGANATLTIDLEKQEIRGPDGGVINFEIDPFRKHCLLNGLDDIGLTMQKKPSIDSFEAREKVARPWL</sequence>
<protein>
    <recommendedName>
        <fullName evidence="1">3-isopropylmalate dehydratase small subunit</fullName>
        <ecNumber evidence="1">4.2.1.33</ecNumber>
    </recommendedName>
    <alternativeName>
        <fullName evidence="1">Alpha-IPM isomerase</fullName>
        <shortName evidence="1">IPMI</shortName>
    </alternativeName>
    <alternativeName>
        <fullName evidence="1">Isopropylmalate isomerase</fullName>
    </alternativeName>
</protein>
<accession>B6JAR2</accession>
<accession>F8BSU6</accession>
<name>LEUD_AFIC5</name>
<evidence type="ECO:0000255" key="1">
    <source>
        <dbReference type="HAMAP-Rule" id="MF_01031"/>
    </source>
</evidence>
<feature type="chain" id="PRO_1000135821" description="3-isopropylmalate dehydratase small subunit">
    <location>
        <begin position="1"/>
        <end position="201"/>
    </location>
</feature>
<gene>
    <name evidence="1" type="primary">leuD</name>
    <name type="ordered locus">OCAR_4276</name>
    <name type="ordered locus">OCA5_c02440</name>
</gene>
<keyword id="KW-0028">Amino-acid biosynthesis</keyword>
<keyword id="KW-0100">Branched-chain amino acid biosynthesis</keyword>
<keyword id="KW-0432">Leucine biosynthesis</keyword>
<keyword id="KW-0456">Lyase</keyword>
<keyword id="KW-1185">Reference proteome</keyword>
<dbReference type="EC" id="4.2.1.33" evidence="1"/>
<dbReference type="EMBL" id="CP001196">
    <property type="protein sequence ID" value="ACI91425.1"/>
    <property type="molecule type" value="Genomic_DNA"/>
</dbReference>
<dbReference type="EMBL" id="CP002826">
    <property type="protein sequence ID" value="AEI04973.1"/>
    <property type="molecule type" value="Genomic_DNA"/>
</dbReference>
<dbReference type="RefSeq" id="WP_012561456.1">
    <property type="nucleotide sequence ID" value="NC_015684.1"/>
</dbReference>
<dbReference type="SMR" id="B6JAR2"/>
<dbReference type="STRING" id="504832.OCA5_c02440"/>
<dbReference type="KEGG" id="oca:OCAR_4276"/>
<dbReference type="KEGG" id="ocg:OCA5_c02440"/>
<dbReference type="PATRIC" id="fig|504832.7.peg.258"/>
<dbReference type="eggNOG" id="COG0066">
    <property type="taxonomic scope" value="Bacteria"/>
</dbReference>
<dbReference type="HOGENOM" id="CLU_081378_0_3_5"/>
<dbReference type="OrthoDB" id="9777465at2"/>
<dbReference type="UniPathway" id="UPA00048">
    <property type="reaction ID" value="UER00071"/>
</dbReference>
<dbReference type="Proteomes" id="UP000007730">
    <property type="component" value="Chromosome"/>
</dbReference>
<dbReference type="GO" id="GO:0009316">
    <property type="term" value="C:3-isopropylmalate dehydratase complex"/>
    <property type="evidence" value="ECO:0007669"/>
    <property type="project" value="InterPro"/>
</dbReference>
<dbReference type="GO" id="GO:0003861">
    <property type="term" value="F:3-isopropylmalate dehydratase activity"/>
    <property type="evidence" value="ECO:0007669"/>
    <property type="project" value="UniProtKB-UniRule"/>
</dbReference>
<dbReference type="GO" id="GO:0009098">
    <property type="term" value="P:L-leucine biosynthetic process"/>
    <property type="evidence" value="ECO:0007669"/>
    <property type="project" value="UniProtKB-UniRule"/>
</dbReference>
<dbReference type="CDD" id="cd01577">
    <property type="entry name" value="IPMI_Swivel"/>
    <property type="match status" value="1"/>
</dbReference>
<dbReference type="FunFam" id="3.20.19.10:FF:000003">
    <property type="entry name" value="3-isopropylmalate dehydratase small subunit"/>
    <property type="match status" value="1"/>
</dbReference>
<dbReference type="Gene3D" id="3.20.19.10">
    <property type="entry name" value="Aconitase, domain 4"/>
    <property type="match status" value="1"/>
</dbReference>
<dbReference type="HAMAP" id="MF_01031">
    <property type="entry name" value="LeuD_type1"/>
    <property type="match status" value="1"/>
</dbReference>
<dbReference type="InterPro" id="IPR004431">
    <property type="entry name" value="3-IsopropMal_deHydase_ssu"/>
</dbReference>
<dbReference type="InterPro" id="IPR015928">
    <property type="entry name" value="Aconitase/3IPM_dehydase_swvl"/>
</dbReference>
<dbReference type="InterPro" id="IPR000573">
    <property type="entry name" value="AconitaseA/IPMdHydase_ssu_swvl"/>
</dbReference>
<dbReference type="InterPro" id="IPR033940">
    <property type="entry name" value="IPMI_Swivel"/>
</dbReference>
<dbReference type="InterPro" id="IPR050075">
    <property type="entry name" value="LeuD"/>
</dbReference>
<dbReference type="NCBIfam" id="TIGR00171">
    <property type="entry name" value="leuD"/>
    <property type="match status" value="1"/>
</dbReference>
<dbReference type="NCBIfam" id="NF002458">
    <property type="entry name" value="PRK01641.1"/>
    <property type="match status" value="1"/>
</dbReference>
<dbReference type="PANTHER" id="PTHR43345:SF5">
    <property type="entry name" value="3-ISOPROPYLMALATE DEHYDRATASE SMALL SUBUNIT"/>
    <property type="match status" value="1"/>
</dbReference>
<dbReference type="PANTHER" id="PTHR43345">
    <property type="entry name" value="3-ISOPROPYLMALATE DEHYDRATASE SMALL SUBUNIT 2-RELATED-RELATED"/>
    <property type="match status" value="1"/>
</dbReference>
<dbReference type="Pfam" id="PF00694">
    <property type="entry name" value="Aconitase_C"/>
    <property type="match status" value="1"/>
</dbReference>
<dbReference type="SUPFAM" id="SSF52016">
    <property type="entry name" value="LeuD/IlvD-like"/>
    <property type="match status" value="1"/>
</dbReference>
<comment type="function">
    <text evidence="1">Catalyzes the isomerization between 2-isopropylmalate and 3-isopropylmalate, via the formation of 2-isopropylmaleate.</text>
</comment>
<comment type="catalytic activity">
    <reaction evidence="1">
        <text>(2R,3S)-3-isopropylmalate = (2S)-2-isopropylmalate</text>
        <dbReference type="Rhea" id="RHEA:32287"/>
        <dbReference type="ChEBI" id="CHEBI:1178"/>
        <dbReference type="ChEBI" id="CHEBI:35121"/>
        <dbReference type="EC" id="4.2.1.33"/>
    </reaction>
</comment>
<comment type="pathway">
    <text evidence="1">Amino-acid biosynthesis; L-leucine biosynthesis; L-leucine from 3-methyl-2-oxobutanoate: step 2/4.</text>
</comment>
<comment type="subunit">
    <text evidence="1">Heterodimer of LeuC and LeuD.</text>
</comment>
<comment type="similarity">
    <text evidence="1">Belongs to the LeuD family. LeuD type 1 subfamily.</text>
</comment>
<proteinExistence type="inferred from homology"/>